<comment type="function">
    <text>Catalyzes the initial reaction in the xylose utilization pathway by reducing D-xylose into xylitol. Xylose is a major component of hemicelluloses such as xylan. Most fungi utilize D-xylose via three enzymatic reactions, xylose reductase (XR), xylitol dehydrogenase (XDH), and xylulokinase, to form xylulose 5-phosphate, which enters pentose phosphate pathway. Also major aldose reductase in pentose and D-galactose catabolism. Reduces the pentose L-arabinose and the hexose D-galactose to their respective polyols. Responsible for extracellular beta-galactosidase formation and cellulase induction during growth on lactose.</text>
</comment>
<comment type="catalytic activity">
    <reaction evidence="2">
        <text>an alditol + NAD(+) = an aldose + NADH + H(+)</text>
        <dbReference type="Rhea" id="RHEA:12785"/>
        <dbReference type="Rhea" id="RHEA-COMP:9554"/>
        <dbReference type="Rhea" id="RHEA-COMP:9555"/>
        <dbReference type="ChEBI" id="CHEBI:15378"/>
        <dbReference type="ChEBI" id="CHEBI:15693"/>
        <dbReference type="ChEBI" id="CHEBI:17522"/>
        <dbReference type="ChEBI" id="CHEBI:57540"/>
        <dbReference type="ChEBI" id="CHEBI:57945"/>
    </reaction>
</comment>
<comment type="catalytic activity">
    <reaction evidence="2">
        <text>an alditol + NADP(+) = an aldose + NADPH + H(+)</text>
        <dbReference type="Rhea" id="RHEA:12789"/>
        <dbReference type="Rhea" id="RHEA-COMP:9554"/>
        <dbReference type="Rhea" id="RHEA-COMP:9555"/>
        <dbReference type="ChEBI" id="CHEBI:15378"/>
        <dbReference type="ChEBI" id="CHEBI:15693"/>
        <dbReference type="ChEBI" id="CHEBI:17522"/>
        <dbReference type="ChEBI" id="CHEBI:57783"/>
        <dbReference type="ChEBI" id="CHEBI:58349"/>
    </reaction>
</comment>
<comment type="catalytic activity">
    <reaction evidence="2">
        <text>xylitol + NAD(+) = D-xylose + NADH + H(+)</text>
        <dbReference type="Rhea" id="RHEA:27441"/>
        <dbReference type="ChEBI" id="CHEBI:15378"/>
        <dbReference type="ChEBI" id="CHEBI:17151"/>
        <dbReference type="ChEBI" id="CHEBI:53455"/>
        <dbReference type="ChEBI" id="CHEBI:57540"/>
        <dbReference type="ChEBI" id="CHEBI:57945"/>
    </reaction>
</comment>
<comment type="catalytic activity">
    <reaction evidence="2">
        <text>xylitol + NADP(+) = D-xylose + NADPH + H(+)</text>
        <dbReference type="Rhea" id="RHEA:27445"/>
        <dbReference type="ChEBI" id="CHEBI:15378"/>
        <dbReference type="ChEBI" id="CHEBI:17151"/>
        <dbReference type="ChEBI" id="CHEBI:53455"/>
        <dbReference type="ChEBI" id="CHEBI:57783"/>
        <dbReference type="ChEBI" id="CHEBI:58349"/>
    </reaction>
</comment>
<comment type="biophysicochemical properties">
    <kinetics>
        <KM evidence="2">25 mM for D-xylose</KM>
        <KM evidence="2">24 mM for D-ribose</KM>
        <KM evidence="2">41 mM for L-arabinose</KM>
        <KM evidence="2">82 mM for D-galactose</KM>
        <KM evidence="2">366 mM for D-glucose</KM>
        <KM evidence="2">11 mM for xylitol</KM>
        <KM evidence="2">76 mM for L-arabinitol</KM>
        <KM evidence="2">155 mM for galactitol</KM>
        <KM evidence="2">98 mM for ribitol</KM>
        <KM evidence="2">159 mM for D-sorbitol</KM>
        <KM evidence="2">0.023 mM for NADPH</KM>
        <KM evidence="2">0.26 mM for NADH</KM>
        <Vmax evidence="2">176.0 nmol/sec/mg enzyme toward NADPH</Vmax>
        <Vmax evidence="2">0.42 nmol/sec/mg enzyme toward NADH</Vmax>
        <Vmax evidence="2">225.0 nmol/sec/mg enzyme with D-xylose as substrate for the reverse reaction</Vmax>
        <Vmax evidence="2">9.0 nmol/sec/mg enzyme with xylitol as substrate for the forward reaction</Vmax>
        <Vmax evidence="2">125.0 nmol/sec/mg enzyme with ribose as substrate for the reverse reaction</Vmax>
        <Vmax evidence="2">9.0 nmol/sec/mg enzyme with ribitol as substrate for the forward reaction</Vmax>
        <Vmax evidence="2">175.0 nmol/sec/mg enzyme with L-arabinose as substrate for the reverse reaction</Vmax>
        <Vmax evidence="2">16.0 nmol/sec/mg enzyme with L-arabinitol as substrate for the forward reaction</Vmax>
        <Vmax evidence="2">18.0 nmol/sec/mg enzyme with D-galactose as substrate for the reverse reaction</Vmax>
        <Vmax evidence="2">9.0 nmol/sec/mg enzyme with galactitol as substrate for the forward reaction</Vmax>
        <Vmax evidence="2">66.0 nmol/sec/mg enzyme with D-glucose as substrate for the reverse reaction</Vmax>
        <Vmax evidence="2">18.0 nmol/sec/mg enzyme with D-sorbitol as substrate for the forward reaction</Vmax>
    </kinetics>
</comment>
<comment type="pathway">
    <text>Carbohydrate metabolism; D-xylose degradation.</text>
</comment>
<comment type="pathway">
    <text>Carbohydrate degradation; L-arabinose degradation via L-arabinitol; D-xylulose 5-phosphate from L-arabinose (fungal route): step 1/5.</text>
</comment>
<comment type="induction">
    <text evidence="2">Regulated by carbon source. Most abundant during growth on D-xylose and L-arabinose.</text>
</comment>
<comment type="similarity">
    <text evidence="3">Belongs to the aldo/keto reductase family.</text>
</comment>
<protein>
    <recommendedName>
        <fullName>NAD(P)H-dependent D-xylose reductase xyl1</fullName>
        <shortName>XR</shortName>
        <ecNumber>1.1.1.-</ecNumber>
    </recommendedName>
</protein>
<sequence>MASPTLKLNSGYDMPQVGFGLWKVDNAVCADTVYNAIKAGYRLFDGACDYGNEKECGEGVARAIKDGLVKREDLFIVSKLWQTFHDEDKVEPITRRQLADWQIDYFDLFLVHFPAALEYVDPSVRYPPGWFYDGKSEVRWSKTTTLQQTWGAMERLVDKGLARSIGVSNYQAQSVYDALIYARIKPATLQIEHHPYLQQPDLVSLAQTEGIVVTAYSSFGPTGFMELDMPRAKSVAPLMDSPVIKALADKHRRTPAQVLLRWATQRGIAVIPKTSRPEVMAQNLDNTSFDLDSEDLAKIADMDLNIRFNKPTNYFSANKLYLFG</sequence>
<feature type="chain" id="PRO_0000124668" description="NAD(P)H-dependent D-xylose reductase xyl1">
    <location>
        <begin position="1"/>
        <end position="324"/>
    </location>
</feature>
<feature type="active site" description="Proton donor" evidence="1">
    <location>
        <position position="50"/>
    </location>
</feature>
<feature type="binding site" evidence="1">
    <location>
        <position position="112"/>
    </location>
    <ligand>
        <name>substrate</name>
    </ligand>
</feature>
<feature type="binding site" evidence="1">
    <location>
        <begin position="168"/>
        <end position="169"/>
    </location>
    <ligand>
        <name>NAD(+)</name>
        <dbReference type="ChEBI" id="CHEBI:57540"/>
    </ligand>
</feature>
<feature type="binding site" evidence="1">
    <location>
        <begin position="217"/>
        <end position="226"/>
    </location>
    <ligand>
        <name>NAD(+)</name>
        <dbReference type="ChEBI" id="CHEBI:57540"/>
    </ligand>
</feature>
<feature type="binding site" evidence="1">
    <location>
        <begin position="273"/>
        <end position="283"/>
    </location>
    <ligand>
        <name>NAD(+)</name>
        <dbReference type="ChEBI" id="CHEBI:57540"/>
    </ligand>
</feature>
<feature type="site" description="Lowers pKa of active site Tyr" evidence="1">
    <location>
        <position position="79"/>
    </location>
</feature>
<name>XYL1_HYPJE</name>
<gene>
    <name type="primary">xyl1</name>
</gene>
<evidence type="ECO:0000250" key="1"/>
<evidence type="ECO:0000269" key="2">
    <source>
    </source>
</evidence>
<evidence type="ECO:0000305" key="3"/>
<reference key="1">
    <citation type="journal article" date="2007" name="Mol. Microbiol.">
        <title>The D-xylose reductase of Hypocrea jecorina is the major aldose reductase in pentose and D-galactose catabolism and necessary for beta-galactosidase and cellulase induction by lactose.</title>
        <authorList>
            <person name="Seiboth B."/>
            <person name="Gamauf C."/>
            <person name="Pail M."/>
            <person name="Hartl L."/>
            <person name="Kubicek C.P."/>
        </authorList>
    </citation>
    <scope>NUCLEOTIDE SEQUENCE [GENOMIC DNA]</scope>
    <scope>CATALYTIC ACTIVITY</scope>
    <scope>BIOPHYSICOCHEMICAL PROPERTIES</scope>
    <scope>INDUCTION</scope>
    <source>
        <strain>ATCC 26921 / CBS 392.92 / QM9414</strain>
    </source>
</reference>
<organism>
    <name type="scientific">Hypocrea jecorina</name>
    <name type="common">Trichoderma reesei</name>
    <dbReference type="NCBI Taxonomy" id="51453"/>
    <lineage>
        <taxon>Eukaryota</taxon>
        <taxon>Fungi</taxon>
        <taxon>Dikarya</taxon>
        <taxon>Ascomycota</taxon>
        <taxon>Pezizomycotina</taxon>
        <taxon>Sordariomycetes</taxon>
        <taxon>Hypocreomycetidae</taxon>
        <taxon>Hypocreales</taxon>
        <taxon>Hypocreaceae</taxon>
        <taxon>Trichoderma</taxon>
    </lineage>
</organism>
<keyword id="KW-0119">Carbohydrate metabolism</keyword>
<keyword id="KW-0520">NAD</keyword>
<keyword id="KW-0521">NADP</keyword>
<keyword id="KW-0560">Oxidoreductase</keyword>
<keyword id="KW-0859">Xylose metabolism</keyword>
<dbReference type="EC" id="1.1.1.-"/>
<dbReference type="EMBL" id="AY116507">
    <property type="protein sequence ID" value="AAM66765.1"/>
    <property type="molecule type" value="Genomic_DNA"/>
</dbReference>
<dbReference type="SMR" id="Q876L8"/>
<dbReference type="OMA" id="DMYLVHT"/>
<dbReference type="BioCyc" id="MetaCyc:MONOMER-16170"/>
<dbReference type="BRENDA" id="1.1.1.307">
    <property type="organism ID" value="6451"/>
</dbReference>
<dbReference type="SABIO-RK" id="Q876L8"/>
<dbReference type="UniPathway" id="UPA00146">
    <property type="reaction ID" value="UER00574"/>
</dbReference>
<dbReference type="UniPathway" id="UPA00810"/>
<dbReference type="GO" id="GO:0032866">
    <property type="term" value="F:D-xylose reductase (NADPH) activity"/>
    <property type="evidence" value="ECO:0007669"/>
    <property type="project" value="InterPro"/>
</dbReference>
<dbReference type="GO" id="GO:0042843">
    <property type="term" value="P:D-xylose catabolic process"/>
    <property type="evidence" value="ECO:0007669"/>
    <property type="project" value="UniProtKB-UniPathway"/>
</dbReference>
<dbReference type="GO" id="GO:0019569">
    <property type="term" value="P:L-arabinose catabolic process to xylulose 5-phosphate"/>
    <property type="evidence" value="ECO:0007669"/>
    <property type="project" value="UniProtKB-UniPathway"/>
</dbReference>
<dbReference type="CDD" id="cd19115">
    <property type="entry name" value="AKR_AKR2D1"/>
    <property type="match status" value="1"/>
</dbReference>
<dbReference type="FunFam" id="3.20.20.100:FF:000007">
    <property type="entry name" value="NAD(P)H-dependent D-xylose reductase xyl1"/>
    <property type="match status" value="1"/>
</dbReference>
<dbReference type="Gene3D" id="3.20.20.100">
    <property type="entry name" value="NADP-dependent oxidoreductase domain"/>
    <property type="match status" value="1"/>
</dbReference>
<dbReference type="InterPro" id="IPR020471">
    <property type="entry name" value="AKR"/>
</dbReference>
<dbReference type="InterPro" id="IPR044487">
    <property type="entry name" value="AKR2D"/>
</dbReference>
<dbReference type="InterPro" id="IPR018170">
    <property type="entry name" value="Aldo/ket_reductase_CS"/>
</dbReference>
<dbReference type="InterPro" id="IPR023210">
    <property type="entry name" value="NADP_OxRdtase_dom"/>
</dbReference>
<dbReference type="InterPro" id="IPR036812">
    <property type="entry name" value="NADP_OxRdtase_dom_sf"/>
</dbReference>
<dbReference type="PANTHER" id="PTHR11732">
    <property type="entry name" value="ALDO/KETO REDUCTASE"/>
    <property type="match status" value="1"/>
</dbReference>
<dbReference type="Pfam" id="PF00248">
    <property type="entry name" value="Aldo_ket_red"/>
    <property type="match status" value="1"/>
</dbReference>
<dbReference type="PIRSF" id="PIRSF000097">
    <property type="entry name" value="AKR"/>
    <property type="match status" value="1"/>
</dbReference>
<dbReference type="PRINTS" id="PR00069">
    <property type="entry name" value="ALDKETRDTASE"/>
</dbReference>
<dbReference type="SUPFAM" id="SSF51430">
    <property type="entry name" value="NAD(P)-linked oxidoreductase"/>
    <property type="match status" value="1"/>
</dbReference>
<dbReference type="PROSITE" id="PS00798">
    <property type="entry name" value="ALDOKETO_REDUCTASE_1"/>
    <property type="match status" value="1"/>
</dbReference>
<dbReference type="PROSITE" id="PS00062">
    <property type="entry name" value="ALDOKETO_REDUCTASE_2"/>
    <property type="match status" value="1"/>
</dbReference>
<proteinExistence type="evidence at protein level"/>
<accession>Q876L8</accession>